<dbReference type="EMBL" id="EF587360">
    <property type="protein sequence ID" value="ABU88200.1"/>
    <property type="molecule type" value="Genomic_DNA"/>
</dbReference>
<dbReference type="EMBL" id="EU677193">
    <property type="protein sequence ID" value="ACC97243.1"/>
    <property type="molecule type" value="Genomic_DNA"/>
</dbReference>
<dbReference type="RefSeq" id="YP_002000446.1">
    <property type="nucleotide sequence ID" value="NC_011031.1"/>
</dbReference>
<dbReference type="SMR" id="B2X1Y7"/>
<dbReference type="GeneID" id="6440131"/>
<dbReference type="GO" id="GO:0009507">
    <property type="term" value="C:chloroplast"/>
    <property type="evidence" value="ECO:0007669"/>
    <property type="project" value="UniProtKB-SubCell"/>
</dbReference>
<dbReference type="GO" id="GO:1990904">
    <property type="term" value="C:ribonucleoprotein complex"/>
    <property type="evidence" value="ECO:0007669"/>
    <property type="project" value="UniProtKB-KW"/>
</dbReference>
<dbReference type="GO" id="GO:0005840">
    <property type="term" value="C:ribosome"/>
    <property type="evidence" value="ECO:0007669"/>
    <property type="project" value="UniProtKB-KW"/>
</dbReference>
<dbReference type="GO" id="GO:0019843">
    <property type="term" value="F:rRNA binding"/>
    <property type="evidence" value="ECO:0007669"/>
    <property type="project" value="UniProtKB-UniRule"/>
</dbReference>
<dbReference type="GO" id="GO:0003735">
    <property type="term" value="F:structural constituent of ribosome"/>
    <property type="evidence" value="ECO:0007669"/>
    <property type="project" value="InterPro"/>
</dbReference>
<dbReference type="GO" id="GO:0000027">
    <property type="term" value="P:ribosomal large subunit assembly"/>
    <property type="evidence" value="ECO:0007669"/>
    <property type="project" value="UniProtKB-UniRule"/>
</dbReference>
<dbReference type="GO" id="GO:0006412">
    <property type="term" value="P:translation"/>
    <property type="evidence" value="ECO:0007669"/>
    <property type="project" value="InterPro"/>
</dbReference>
<dbReference type="CDD" id="cd07026">
    <property type="entry name" value="Ribosomal_L20"/>
    <property type="match status" value="1"/>
</dbReference>
<dbReference type="FunFam" id="1.10.1900.20:FF:000001">
    <property type="entry name" value="50S ribosomal protein L20"/>
    <property type="match status" value="1"/>
</dbReference>
<dbReference type="Gene3D" id="6.10.160.10">
    <property type="match status" value="1"/>
</dbReference>
<dbReference type="Gene3D" id="1.10.1900.20">
    <property type="entry name" value="Ribosomal protein L20"/>
    <property type="match status" value="1"/>
</dbReference>
<dbReference type="HAMAP" id="MF_00382">
    <property type="entry name" value="Ribosomal_bL20"/>
    <property type="match status" value="1"/>
</dbReference>
<dbReference type="InterPro" id="IPR005813">
    <property type="entry name" value="Ribosomal_bL20"/>
</dbReference>
<dbReference type="InterPro" id="IPR049946">
    <property type="entry name" value="RIBOSOMAL_L20_CS"/>
</dbReference>
<dbReference type="InterPro" id="IPR035566">
    <property type="entry name" value="Ribosomal_protein_bL20_C"/>
</dbReference>
<dbReference type="NCBIfam" id="TIGR01032">
    <property type="entry name" value="rplT_bact"/>
    <property type="match status" value="1"/>
</dbReference>
<dbReference type="PANTHER" id="PTHR10986">
    <property type="entry name" value="39S RIBOSOMAL PROTEIN L20"/>
    <property type="match status" value="1"/>
</dbReference>
<dbReference type="Pfam" id="PF00453">
    <property type="entry name" value="Ribosomal_L20"/>
    <property type="match status" value="1"/>
</dbReference>
<dbReference type="PRINTS" id="PR00062">
    <property type="entry name" value="RIBOSOMALL20"/>
</dbReference>
<dbReference type="SUPFAM" id="SSF74731">
    <property type="entry name" value="Ribosomal protein L20"/>
    <property type="match status" value="1"/>
</dbReference>
<dbReference type="PROSITE" id="PS00937">
    <property type="entry name" value="RIBOSOMAL_L20"/>
    <property type="match status" value="1"/>
</dbReference>
<gene>
    <name evidence="1" type="primary">rpl20</name>
</gene>
<organism>
    <name type="scientific">Oedogonium cardiacum</name>
    <name type="common">Filamentous green alga</name>
    <dbReference type="NCBI Taxonomy" id="55995"/>
    <lineage>
        <taxon>Eukaryota</taxon>
        <taxon>Viridiplantae</taxon>
        <taxon>Chlorophyta</taxon>
        <taxon>core chlorophytes</taxon>
        <taxon>Chlorophyceae</taxon>
        <taxon>OCC clade</taxon>
        <taxon>Oedogoniales</taxon>
        <taxon>Oedogoniaceae</taxon>
        <taxon>Oedogonium</taxon>
    </lineage>
</organism>
<sequence>MTRVKRGIIARKRRQKILNMNKGFRGAASVLFRTANQRYMKSLRSAYENRHNKKRNFRKLWISRLNSAVRLNGLNYSQFVYMLKKSGIILNRKILSQLSICDPQIFHELYSYIASKNLI</sequence>
<name>RK20_OEDCA</name>
<evidence type="ECO:0000255" key="1">
    <source>
        <dbReference type="HAMAP-Rule" id="MF_00382"/>
    </source>
</evidence>
<evidence type="ECO:0000305" key="2"/>
<feature type="chain" id="PRO_0000355517" description="Large ribosomal subunit protein bL20c">
    <location>
        <begin position="1"/>
        <end position="119"/>
    </location>
</feature>
<geneLocation type="chloroplast"/>
<protein>
    <recommendedName>
        <fullName evidence="1">Large ribosomal subunit protein bL20c</fullName>
    </recommendedName>
    <alternativeName>
        <fullName evidence="2">50S ribosomal protein L20, chloroplastic</fullName>
    </alternativeName>
</protein>
<comment type="function">
    <text evidence="1">Binds directly to 23S ribosomal RNA and is necessary for the in vitro assembly process of the 50S ribosomal subunit. It is not involved in the protein synthesizing functions of that subunit.</text>
</comment>
<comment type="subcellular location">
    <subcellularLocation>
        <location>Plastid</location>
        <location>Chloroplast</location>
    </subcellularLocation>
</comment>
<comment type="similarity">
    <text evidence="1">Belongs to the bacterial ribosomal protein bL20 family.</text>
</comment>
<accession>B2X1Y7</accession>
<reference key="1">
    <citation type="journal article" date="2008" name="J. Phycol.">
        <title>Deep division in the Chlorophyceae (Chlorophyta) revealed by chloroplast phylogenomic analyseS.</title>
        <authorList>
            <person name="Turmel M."/>
            <person name="Brouard J.-S."/>
            <person name="Gagnon C."/>
            <person name="Otis C."/>
            <person name="Lemieux C."/>
        </authorList>
        <dbReference type="AGRICOLA" id="IND44059346"/>
    </citation>
    <scope>NUCLEOTIDE SEQUENCE [GENOMIC DNA]</scope>
    <source>
        <strain>SAG 575-1b / CCAP 575/1B / UTEX LB 40</strain>
    </source>
</reference>
<reference key="2">
    <citation type="journal article" date="2008" name="BMC Genomics">
        <title>Chloroplast DNA sequence of the green alga Oedogonium cardiacum (Chlorophyceae): unique genome architecture, derived characters shared with the Chaetophorales and novel genes acquired through horizontal transfer.</title>
        <authorList>
            <person name="Brouard J.-S."/>
            <person name="Otis C."/>
            <person name="Lemieux C."/>
            <person name="Turmel M."/>
        </authorList>
    </citation>
    <scope>NUCLEOTIDE SEQUENCE [LARGE SCALE GENOMIC DNA]</scope>
    <source>
        <strain>SAG 575-1b / CCAP 575/1B / UTEX LB 40</strain>
    </source>
</reference>
<proteinExistence type="inferred from homology"/>
<keyword id="KW-0150">Chloroplast</keyword>
<keyword id="KW-0934">Plastid</keyword>
<keyword id="KW-0687">Ribonucleoprotein</keyword>
<keyword id="KW-0689">Ribosomal protein</keyword>
<keyword id="KW-0694">RNA-binding</keyword>
<keyword id="KW-0699">rRNA-binding</keyword>